<sequence>MSVRKILRMGDPILRKISEPVTEDEIQTKEFKKLIRDMFDTMRHAEGVGLAAPQIGILKQIVVVGSEDNERYPGTPDVPERIILNPVITPLTKDTSGFWEGCLSVPGMRGYVERPNQIRMQWMDEKGNQFDETIDGYKAIVYQHECDHLQGILYVDRLKDTKLFGFNETLDSSHNVLD</sequence>
<reference key="1">
    <citation type="journal article" date="2004" name="J. Bacteriol.">
        <title>Comparative genomics of two Leptospira interrogans serovars reveals novel insights into physiology and pathogenesis.</title>
        <authorList>
            <person name="Nascimento A.L.T.O."/>
            <person name="Ko A.I."/>
            <person name="Martins E.A.L."/>
            <person name="Monteiro-Vitorello C.B."/>
            <person name="Ho P.L."/>
            <person name="Haake D.A."/>
            <person name="Verjovski-Almeida S."/>
            <person name="Hartskeerl R.A."/>
            <person name="Marques M.V."/>
            <person name="Oliveira M.C."/>
            <person name="Menck C.F.M."/>
            <person name="Leite L.C.C."/>
            <person name="Carrer H."/>
            <person name="Coutinho L.L."/>
            <person name="Degrave W.M."/>
            <person name="Dellagostin O.A."/>
            <person name="El-Dorry H."/>
            <person name="Ferro E.S."/>
            <person name="Ferro M.I.T."/>
            <person name="Furlan L.R."/>
            <person name="Gamberini M."/>
            <person name="Giglioti E.A."/>
            <person name="Goes-Neto A."/>
            <person name="Goldman G.H."/>
            <person name="Goldman M.H.S."/>
            <person name="Harakava R."/>
            <person name="Jeronimo S.M.B."/>
            <person name="Junqueira-de-Azevedo I.L.M."/>
            <person name="Kimura E.T."/>
            <person name="Kuramae E.E."/>
            <person name="Lemos E.G.M."/>
            <person name="Lemos M.V.F."/>
            <person name="Marino C.L."/>
            <person name="Nunes L.R."/>
            <person name="de Oliveira R.C."/>
            <person name="Pereira G.G."/>
            <person name="Reis M.S."/>
            <person name="Schriefer A."/>
            <person name="Siqueira W.J."/>
            <person name="Sommer P."/>
            <person name="Tsai S.M."/>
            <person name="Simpson A.J.G."/>
            <person name="Ferro J.A."/>
            <person name="Camargo L.E.A."/>
            <person name="Kitajima J.P."/>
            <person name="Setubal J.C."/>
            <person name="Van Sluys M.A."/>
        </authorList>
    </citation>
    <scope>NUCLEOTIDE SEQUENCE [LARGE SCALE GENOMIC DNA]</scope>
    <source>
        <strain>Fiocruz L1-130</strain>
    </source>
</reference>
<protein>
    <recommendedName>
        <fullName evidence="1">Peptide deformylase</fullName>
        <shortName evidence="1">PDF</shortName>
        <ecNumber evidence="1">3.5.1.88</ecNumber>
    </recommendedName>
    <alternativeName>
        <fullName evidence="1">Polypeptide deformylase</fullName>
    </alternativeName>
</protein>
<organism>
    <name type="scientific">Leptospira interrogans serogroup Icterohaemorrhagiae serovar copenhageni (strain Fiocruz L1-130)</name>
    <dbReference type="NCBI Taxonomy" id="267671"/>
    <lineage>
        <taxon>Bacteria</taxon>
        <taxon>Pseudomonadati</taxon>
        <taxon>Spirochaetota</taxon>
        <taxon>Spirochaetia</taxon>
        <taxon>Leptospirales</taxon>
        <taxon>Leptospiraceae</taxon>
        <taxon>Leptospira</taxon>
    </lineage>
</organism>
<gene>
    <name evidence="1" type="primary">def</name>
    <name type="ordered locus">LIC_11511</name>
</gene>
<comment type="function">
    <text evidence="1">Removes the formyl group from the N-terminal Met of newly synthesized proteins. Requires at least a dipeptide for an efficient rate of reaction. N-terminal L-methionine is a prerequisite for activity but the enzyme has broad specificity at other positions.</text>
</comment>
<comment type="catalytic activity">
    <reaction evidence="1">
        <text>N-terminal N-formyl-L-methionyl-[peptide] + H2O = N-terminal L-methionyl-[peptide] + formate</text>
        <dbReference type="Rhea" id="RHEA:24420"/>
        <dbReference type="Rhea" id="RHEA-COMP:10639"/>
        <dbReference type="Rhea" id="RHEA-COMP:10640"/>
        <dbReference type="ChEBI" id="CHEBI:15377"/>
        <dbReference type="ChEBI" id="CHEBI:15740"/>
        <dbReference type="ChEBI" id="CHEBI:49298"/>
        <dbReference type="ChEBI" id="CHEBI:64731"/>
        <dbReference type="EC" id="3.5.1.88"/>
    </reaction>
</comment>
<comment type="cofactor">
    <cofactor evidence="1">
        <name>Fe(2+)</name>
        <dbReference type="ChEBI" id="CHEBI:29033"/>
    </cofactor>
    <text evidence="1">Binds 1 Fe(2+) ion.</text>
</comment>
<comment type="similarity">
    <text evidence="1">Belongs to the polypeptide deformylase family.</text>
</comment>
<feature type="chain" id="PRO_0000082794" description="Peptide deformylase">
    <location>
        <begin position="1"/>
        <end position="178"/>
    </location>
</feature>
<feature type="active site" evidence="1">
    <location>
        <position position="145"/>
    </location>
</feature>
<feature type="binding site" evidence="1">
    <location>
        <position position="102"/>
    </location>
    <ligand>
        <name>Fe cation</name>
        <dbReference type="ChEBI" id="CHEBI:24875"/>
    </ligand>
</feature>
<feature type="binding site" evidence="1">
    <location>
        <position position="144"/>
    </location>
    <ligand>
        <name>Fe cation</name>
        <dbReference type="ChEBI" id="CHEBI:24875"/>
    </ligand>
</feature>
<feature type="binding site" evidence="1">
    <location>
        <position position="148"/>
    </location>
    <ligand>
        <name>Fe cation</name>
        <dbReference type="ChEBI" id="CHEBI:24875"/>
    </ligand>
</feature>
<dbReference type="EC" id="3.5.1.88" evidence="1"/>
<dbReference type="EMBL" id="AE016823">
    <property type="protein sequence ID" value="AAS70108.1"/>
    <property type="molecule type" value="Genomic_DNA"/>
</dbReference>
<dbReference type="RefSeq" id="WP_000116243.1">
    <property type="nucleotide sequence ID" value="NC_005823.1"/>
</dbReference>
<dbReference type="SMR" id="Q72S74"/>
<dbReference type="GeneID" id="61144810"/>
<dbReference type="KEGG" id="lic:LIC_11511"/>
<dbReference type="HOGENOM" id="CLU_061901_5_2_12"/>
<dbReference type="Proteomes" id="UP000007037">
    <property type="component" value="Chromosome I"/>
</dbReference>
<dbReference type="GO" id="GO:0046872">
    <property type="term" value="F:metal ion binding"/>
    <property type="evidence" value="ECO:0007669"/>
    <property type="project" value="UniProtKB-KW"/>
</dbReference>
<dbReference type="GO" id="GO:0042586">
    <property type="term" value="F:peptide deformylase activity"/>
    <property type="evidence" value="ECO:0007669"/>
    <property type="project" value="UniProtKB-UniRule"/>
</dbReference>
<dbReference type="GO" id="GO:0043686">
    <property type="term" value="P:co-translational protein modification"/>
    <property type="evidence" value="ECO:0007669"/>
    <property type="project" value="TreeGrafter"/>
</dbReference>
<dbReference type="GO" id="GO:0006412">
    <property type="term" value="P:translation"/>
    <property type="evidence" value="ECO:0007669"/>
    <property type="project" value="UniProtKB-UniRule"/>
</dbReference>
<dbReference type="CDD" id="cd00487">
    <property type="entry name" value="Pep_deformylase"/>
    <property type="match status" value="1"/>
</dbReference>
<dbReference type="FunFam" id="3.90.45.10:FF:000003">
    <property type="entry name" value="Peptide deformylase"/>
    <property type="match status" value="1"/>
</dbReference>
<dbReference type="Gene3D" id="3.90.45.10">
    <property type="entry name" value="Peptide deformylase"/>
    <property type="match status" value="1"/>
</dbReference>
<dbReference type="HAMAP" id="MF_00163">
    <property type="entry name" value="Pep_deformylase"/>
    <property type="match status" value="1"/>
</dbReference>
<dbReference type="InterPro" id="IPR023635">
    <property type="entry name" value="Peptide_deformylase"/>
</dbReference>
<dbReference type="InterPro" id="IPR036821">
    <property type="entry name" value="Peptide_deformylase_sf"/>
</dbReference>
<dbReference type="NCBIfam" id="TIGR00079">
    <property type="entry name" value="pept_deformyl"/>
    <property type="match status" value="1"/>
</dbReference>
<dbReference type="NCBIfam" id="NF001159">
    <property type="entry name" value="PRK00150.1-3"/>
    <property type="match status" value="1"/>
</dbReference>
<dbReference type="PANTHER" id="PTHR10458">
    <property type="entry name" value="PEPTIDE DEFORMYLASE"/>
    <property type="match status" value="1"/>
</dbReference>
<dbReference type="PANTHER" id="PTHR10458:SF20">
    <property type="entry name" value="PEPTIDE DEFORMYLASE 1"/>
    <property type="match status" value="1"/>
</dbReference>
<dbReference type="Pfam" id="PF01327">
    <property type="entry name" value="Pep_deformylase"/>
    <property type="match status" value="1"/>
</dbReference>
<dbReference type="PIRSF" id="PIRSF004749">
    <property type="entry name" value="Pep_def"/>
    <property type="match status" value="1"/>
</dbReference>
<dbReference type="PRINTS" id="PR01576">
    <property type="entry name" value="PDEFORMYLASE"/>
</dbReference>
<dbReference type="SUPFAM" id="SSF56420">
    <property type="entry name" value="Peptide deformylase"/>
    <property type="match status" value="1"/>
</dbReference>
<keyword id="KW-0378">Hydrolase</keyword>
<keyword id="KW-0408">Iron</keyword>
<keyword id="KW-0479">Metal-binding</keyword>
<keyword id="KW-0648">Protein biosynthesis</keyword>
<proteinExistence type="inferred from homology"/>
<name>DEF_LEPIC</name>
<accession>Q72S74</accession>
<evidence type="ECO:0000255" key="1">
    <source>
        <dbReference type="HAMAP-Rule" id="MF_00163"/>
    </source>
</evidence>